<dbReference type="EMBL" id="AB026651">
    <property type="status" value="NOT_ANNOTATED_CDS"/>
    <property type="molecule type" value="Genomic_DNA"/>
</dbReference>
<dbReference type="EMBL" id="CP002688">
    <property type="protein sequence ID" value="AED95004.1"/>
    <property type="molecule type" value="Genomic_DNA"/>
</dbReference>
<dbReference type="EMBL" id="AY052350">
    <property type="protein sequence ID" value="AAK96542.1"/>
    <property type="molecule type" value="mRNA"/>
</dbReference>
<dbReference type="EMBL" id="AY059653">
    <property type="protein sequence ID" value="AAL31146.1"/>
    <property type="molecule type" value="mRNA"/>
</dbReference>
<dbReference type="EMBL" id="AY062646">
    <property type="protein sequence ID" value="AAL32724.1"/>
    <property type="molecule type" value="mRNA"/>
</dbReference>
<dbReference type="EMBL" id="AY093257">
    <property type="protein sequence ID" value="AAM13256.1"/>
    <property type="molecule type" value="mRNA"/>
</dbReference>
<dbReference type="RefSeq" id="NP_568628.1">
    <molecule id="Q940Y9-1"/>
    <property type="nucleotide sequence ID" value="NM_123741.3"/>
</dbReference>
<dbReference type="SMR" id="Q940Y9"/>
<dbReference type="FunCoup" id="Q940Y9">
    <property type="interactions" value="353"/>
</dbReference>
<dbReference type="STRING" id="3702.Q940Y9"/>
<dbReference type="GlyGen" id="Q940Y9">
    <property type="glycosylation" value="1 site"/>
</dbReference>
<dbReference type="PaxDb" id="3702-AT5G43745.1"/>
<dbReference type="ProteomicsDB" id="236581">
    <molecule id="Q940Y9-1"/>
</dbReference>
<dbReference type="EnsemblPlants" id="AT5G43745.1">
    <molecule id="Q940Y9-1"/>
    <property type="protein sequence ID" value="AT5G43745.1"/>
    <property type="gene ID" value="AT5G43745"/>
</dbReference>
<dbReference type="GeneID" id="834395"/>
<dbReference type="Gramene" id="AT5G43745.1">
    <molecule id="Q940Y9-1"/>
    <property type="protein sequence ID" value="AT5G43745.1"/>
    <property type="gene ID" value="AT5G43745"/>
</dbReference>
<dbReference type="KEGG" id="ath:AT5G43745"/>
<dbReference type="Araport" id="AT5G43745"/>
<dbReference type="TAIR" id="AT5G43745"/>
<dbReference type="eggNOG" id="ENOG502QW0U">
    <property type="taxonomic scope" value="Eukaryota"/>
</dbReference>
<dbReference type="HOGENOM" id="CLU_011206_0_0_1"/>
<dbReference type="InParanoid" id="Q940Y9"/>
<dbReference type="OMA" id="HHIDVLT"/>
<dbReference type="OrthoDB" id="1923901at2759"/>
<dbReference type="PhylomeDB" id="Q940Y9"/>
<dbReference type="PRO" id="PR:Q940Y9"/>
<dbReference type="Proteomes" id="UP000006548">
    <property type="component" value="Chromosome 5"/>
</dbReference>
<dbReference type="ExpressionAtlas" id="Q940Y9">
    <property type="expression patterns" value="baseline and differential"/>
</dbReference>
<dbReference type="GO" id="GO:0009507">
    <property type="term" value="C:chloroplast"/>
    <property type="evidence" value="ECO:0007005"/>
    <property type="project" value="TAIR"/>
</dbReference>
<dbReference type="GO" id="GO:0009941">
    <property type="term" value="C:chloroplast envelope"/>
    <property type="evidence" value="ECO:0007005"/>
    <property type="project" value="TAIR"/>
</dbReference>
<dbReference type="GO" id="GO:0009536">
    <property type="term" value="C:plastid"/>
    <property type="evidence" value="ECO:0007005"/>
    <property type="project" value="TAIR"/>
</dbReference>
<dbReference type="GO" id="GO:0042170">
    <property type="term" value="C:plastid membrane"/>
    <property type="evidence" value="ECO:0000314"/>
    <property type="project" value="TAIR"/>
</dbReference>
<dbReference type="GO" id="GO:0006811">
    <property type="term" value="P:monoatomic ion transport"/>
    <property type="evidence" value="ECO:0007669"/>
    <property type="project" value="InterPro"/>
</dbReference>
<dbReference type="FunFam" id="3.40.50.720:FF:000709">
    <property type="entry name" value="Putative ion channel POLLUX-like 2"/>
    <property type="match status" value="1"/>
</dbReference>
<dbReference type="Gene3D" id="3.40.50.720">
    <property type="entry name" value="NAD(P)-binding Rossmann-like Domain"/>
    <property type="match status" value="1"/>
</dbReference>
<dbReference type="InterPro" id="IPR044849">
    <property type="entry name" value="CASTOR/POLLUX/SYM8-like"/>
</dbReference>
<dbReference type="InterPro" id="IPR010420">
    <property type="entry name" value="CASTOR/POLLUX/SYM8_dom"/>
</dbReference>
<dbReference type="InterPro" id="IPR003148">
    <property type="entry name" value="RCK_N"/>
</dbReference>
<dbReference type="PANTHER" id="PTHR31563:SF13">
    <property type="entry name" value="ION CHANNEL POLLUX-LIKE 1-RELATED"/>
    <property type="match status" value="1"/>
</dbReference>
<dbReference type="PANTHER" id="PTHR31563">
    <property type="entry name" value="ION CHANNEL POLLUX-RELATED"/>
    <property type="match status" value="1"/>
</dbReference>
<dbReference type="Pfam" id="PF06241">
    <property type="entry name" value="Castor_Poll_mid"/>
    <property type="match status" value="1"/>
</dbReference>
<dbReference type="SUPFAM" id="SSF81324">
    <property type="entry name" value="Voltage-gated potassium channels"/>
    <property type="match status" value="1"/>
</dbReference>
<dbReference type="PROSITE" id="PS51201">
    <property type="entry name" value="RCK_N"/>
    <property type="match status" value="2"/>
</dbReference>
<comment type="subcellular location">
    <subcellularLocation>
        <location evidence="4">Membrane</location>
        <topology evidence="4">Multi-pass membrane protein</topology>
    </subcellularLocation>
</comment>
<comment type="alternative products">
    <event type="alternative splicing"/>
    <isoform>
        <id>Q940Y9-1</id>
        <name>1</name>
        <sequence type="displayed"/>
    </isoform>
    <isoform>
        <id>Q940Y9-2</id>
        <name>2</name>
        <sequence type="described" ref="VSP_042187"/>
    </isoform>
</comment>
<comment type="miscellaneous">
    <molecule>Isoform 2</molecule>
    <text evidence="4">May be due to competing acceptor splice sites.</text>
</comment>
<comment type="similarity">
    <text evidence="4">Belongs to the castor/pollux (TC 1.A.1.23) family.</text>
</comment>
<protein>
    <recommendedName>
        <fullName>Putative ion channel POLLUX-like 2</fullName>
    </recommendedName>
</protein>
<keyword id="KW-0025">Alternative splicing</keyword>
<keyword id="KW-0472">Membrane</keyword>
<keyword id="KW-1185">Reference proteome</keyword>
<keyword id="KW-0812">Transmembrane</keyword>
<keyword id="KW-1133">Transmembrane helix</keyword>
<accession>Q940Y9</accession>
<accession>Q8W4D3</accession>
<proteinExistence type="evidence at transcript level"/>
<name>POLL2_ARATH</name>
<organism>
    <name type="scientific">Arabidopsis thaliana</name>
    <name type="common">Mouse-ear cress</name>
    <dbReference type="NCBI Taxonomy" id="3702"/>
    <lineage>
        <taxon>Eukaryota</taxon>
        <taxon>Viridiplantae</taxon>
        <taxon>Streptophyta</taxon>
        <taxon>Embryophyta</taxon>
        <taxon>Tracheophyta</taxon>
        <taxon>Spermatophyta</taxon>
        <taxon>Magnoliopsida</taxon>
        <taxon>eudicotyledons</taxon>
        <taxon>Gunneridae</taxon>
        <taxon>Pentapetalae</taxon>
        <taxon>rosids</taxon>
        <taxon>malvids</taxon>
        <taxon>Brassicales</taxon>
        <taxon>Brassicaceae</taxon>
        <taxon>Camelineae</taxon>
        <taxon>Arabidopsis</taxon>
    </lineage>
</organism>
<reference key="1">
    <citation type="submission" date="1999-04" db="EMBL/GenBank/DDBJ databases">
        <title>Structural analysis of Arabidopsis thaliana chromosome 5. XI.</title>
        <authorList>
            <person name="Kaneko T."/>
            <person name="Katoh T."/>
            <person name="Asamizu E."/>
            <person name="Sato S."/>
            <person name="Nakamura Y."/>
            <person name="Kotani H."/>
            <person name="Tabata S."/>
        </authorList>
    </citation>
    <scope>NUCLEOTIDE SEQUENCE [LARGE SCALE GENOMIC DNA]</scope>
    <source>
        <strain>cv. Columbia</strain>
    </source>
</reference>
<reference key="2">
    <citation type="journal article" date="2017" name="Plant J.">
        <title>Araport11: a complete reannotation of the Arabidopsis thaliana reference genome.</title>
        <authorList>
            <person name="Cheng C.Y."/>
            <person name="Krishnakumar V."/>
            <person name="Chan A.P."/>
            <person name="Thibaud-Nissen F."/>
            <person name="Schobel S."/>
            <person name="Town C.D."/>
        </authorList>
    </citation>
    <scope>GENOME REANNOTATION</scope>
    <source>
        <strain>cv. Columbia</strain>
    </source>
</reference>
<reference key="3">
    <citation type="journal article" date="2003" name="Science">
        <title>Empirical analysis of transcriptional activity in the Arabidopsis genome.</title>
        <authorList>
            <person name="Yamada K."/>
            <person name="Lim J."/>
            <person name="Dale J.M."/>
            <person name="Chen H."/>
            <person name="Shinn P."/>
            <person name="Palm C.J."/>
            <person name="Southwick A.M."/>
            <person name="Wu H.C."/>
            <person name="Kim C.J."/>
            <person name="Nguyen M."/>
            <person name="Pham P.K."/>
            <person name="Cheuk R.F."/>
            <person name="Karlin-Newmann G."/>
            <person name="Liu S.X."/>
            <person name="Lam B."/>
            <person name="Sakano H."/>
            <person name="Wu T."/>
            <person name="Yu G."/>
            <person name="Miranda M."/>
            <person name="Quach H.L."/>
            <person name="Tripp M."/>
            <person name="Chang C.H."/>
            <person name="Lee J.M."/>
            <person name="Toriumi M.J."/>
            <person name="Chan M.M."/>
            <person name="Tang C.C."/>
            <person name="Onodera C.S."/>
            <person name="Deng J.M."/>
            <person name="Akiyama K."/>
            <person name="Ansari Y."/>
            <person name="Arakawa T."/>
            <person name="Banh J."/>
            <person name="Banno F."/>
            <person name="Bowser L."/>
            <person name="Brooks S.Y."/>
            <person name="Carninci P."/>
            <person name="Chao Q."/>
            <person name="Choy N."/>
            <person name="Enju A."/>
            <person name="Goldsmith A.D."/>
            <person name="Gurjal M."/>
            <person name="Hansen N.F."/>
            <person name="Hayashizaki Y."/>
            <person name="Johnson-Hopson C."/>
            <person name="Hsuan V.W."/>
            <person name="Iida K."/>
            <person name="Karnes M."/>
            <person name="Khan S."/>
            <person name="Koesema E."/>
            <person name="Ishida J."/>
            <person name="Jiang P.X."/>
            <person name="Jones T."/>
            <person name="Kawai J."/>
            <person name="Kamiya A."/>
            <person name="Meyers C."/>
            <person name="Nakajima M."/>
            <person name="Narusaka M."/>
            <person name="Seki M."/>
            <person name="Sakurai T."/>
            <person name="Satou M."/>
            <person name="Tamse R."/>
            <person name="Vaysberg M."/>
            <person name="Wallender E.K."/>
            <person name="Wong C."/>
            <person name="Yamamura Y."/>
            <person name="Yuan S."/>
            <person name="Shinozaki K."/>
            <person name="Davis R.W."/>
            <person name="Theologis A."/>
            <person name="Ecker J.R."/>
        </authorList>
    </citation>
    <scope>NUCLEOTIDE SEQUENCE [LARGE SCALE MRNA] (ISOFORMS 1 AND 2)</scope>
    <source>
        <strain>cv. Columbia</strain>
    </source>
</reference>
<sequence>MMVAVQLFTWKPLVLLPSQSSRLDRFASFNRSLSLKSLPLGGIGSFRCPGTFKVKSQRTGDTEPSSSVNLNDFSSILHKSLPYKVVIGCIPLYAVFRIAQKICQELPRLVQNSVGAGLPFACASNSLPTPLKLDVSFPSFQDIRWGLARFLYLFNIQLEKNIGTFLVALMIACVSFVIIGGLLFFKFRKDLPLEDCLWEAWACLISSSTHLKQKTRIERVIGFVLAIWGILFYSRLLSTMTEQFRYNMTKLREGAQMQVLEADHIIICGINSHLPFILKQLNSYHEHAVRLGTATARKQRLLLMSDTPRKQMDKLAEAYSKDFNHIDILTKSCSLNLTKSFERAAASMARAIIILPTKGDRYEVDTDAFLSVLALQPIQKMESIPTIVEVSSPNTYDLLKSISGLKVEPVENVTSKLFVQCSRQKDLIKIYRHLLNYSKNVFNLCSFPNLVGTKYRQLRLGFQEVVVCGLLRDGKVNFHPNDNEELMETDKLLFIAPLNWKKKQLLYTDMKLENITVPTDTRKQVFEKKRSRLSKIIMRPRKSLSKGSDSVKGPTESILLLGWRGDVVQMIEEFDNYLGPGSSMEILSDVSLEDRRRVGDSIGSVKIKNIQVSHKVGNPLNYDTLKQTIMRMKSKYRKGKNIPLTILVISDRDWLLGDPSRADKQSAYSLLLAESICNKLGVKVHNLASEIVDSKLGKQITGLKPSLTFIAAEEVMSLVTAQVAENSELNEVWKDILDADGDEIYVKDVELYMKEGENPSFTELSERAWLRREVAIGYIKGGKKMINPVPKNEPLSLEMDDSLIVISELEGDQPITL</sequence>
<feature type="chain" id="PRO_0000415275" description="Putative ion channel POLLUX-like 2">
    <location>
        <begin position="1"/>
        <end position="817"/>
    </location>
</feature>
<feature type="transmembrane region" description="Helical" evidence="1">
    <location>
        <begin position="165"/>
        <end position="185"/>
    </location>
</feature>
<feature type="transmembrane region" description="Helical" evidence="1">
    <location>
        <begin position="220"/>
        <end position="240"/>
    </location>
</feature>
<feature type="domain" description="RCK N-terminal 1" evidence="2">
    <location>
        <begin position="262"/>
        <end position="411"/>
    </location>
</feature>
<feature type="domain" description="RCK N-terminal 2" evidence="2">
    <location>
        <begin position="555"/>
        <end position="716"/>
    </location>
</feature>
<feature type="splice variant" id="VSP_042187" description="In isoform 2." evidence="3">
    <location>
        <begin position="1"/>
        <end position="347"/>
    </location>
</feature>
<evidence type="ECO:0000255" key="1"/>
<evidence type="ECO:0000255" key="2">
    <source>
        <dbReference type="PROSITE-ProRule" id="PRU00543"/>
    </source>
</evidence>
<evidence type="ECO:0000303" key="3">
    <source>
    </source>
</evidence>
<evidence type="ECO:0000305" key="4"/>
<gene>
    <name type="ordered locus">At5g43745</name>
    <name type="ORF">MQD19.8</name>
</gene>